<keyword id="KW-0808">Transferase</keyword>
<accession>P42860</accession>
<reference key="1">
    <citation type="journal article" date="1994" name="Biochem. J.">
        <title>Purification, molecular cloning and heterologous expression of a glutathione S-transferase from the Australian sheep blowfly (Lucilia cuprina).</title>
        <authorList>
            <person name="Board P.G."/>
            <person name="Russell R."/>
            <person name="Marano R."/>
            <person name="Oakeshott J.G."/>
        </authorList>
    </citation>
    <scope>NUCLEOTIDE SEQUENCE [MRNA]</scope>
    <source>
        <strain>LS-2</strain>
    </source>
</reference>
<reference key="2">
    <citation type="journal article" date="1995" name="EMBO J.">
        <title>Crystal structure of a theta-class glutathione transferase.</title>
        <authorList>
            <person name="Wilce M.J.C."/>
            <person name="Board P.G."/>
            <person name="Feil S.C."/>
            <person name="Parker M.W."/>
        </authorList>
    </citation>
    <scope>X-RAY CRYSTALLOGRAPHY (2.2 ANGSTROMS)</scope>
    <scope>SEQUENCE REVISION TO 10-13</scope>
</reference>
<name>GSTT1_LUCCU</name>
<feature type="chain" id="PRO_0000185963" description="Glutathione S-transferase 1-1">
    <location>
        <begin position="1"/>
        <end position="208"/>
    </location>
</feature>
<feature type="domain" description="GST N-terminal">
    <location>
        <begin position="1"/>
        <end position="80"/>
    </location>
</feature>
<feature type="domain" description="GST C-terminal">
    <location>
        <begin position="86"/>
        <end position="207"/>
    </location>
</feature>
<feature type="binding site" evidence="1">
    <location>
        <position position="9"/>
    </location>
    <ligand>
        <name>glutathione</name>
        <dbReference type="ChEBI" id="CHEBI:57925"/>
    </ligand>
</feature>
<feature type="binding site" evidence="1">
    <location>
        <begin position="50"/>
        <end position="52"/>
    </location>
    <ligand>
        <name>glutathione</name>
        <dbReference type="ChEBI" id="CHEBI:57925"/>
    </ligand>
</feature>
<feature type="binding site" evidence="1">
    <location>
        <begin position="64"/>
        <end position="66"/>
    </location>
    <ligand>
        <name>glutathione</name>
        <dbReference type="ChEBI" id="CHEBI:57925"/>
    </ligand>
</feature>
<proteinExistence type="evidence at protein level"/>
<sequence>MDFYYLPGSAPCRSVLMTAKALGIELNKKLLNLQAGEHLKPEFLKINPQHTIPTLVDGDFALWESRAIMVYLVEKYGKNDSLFPKCPKKRAVINQRLYFDMGTLYKSFADYYYPQIFAKAPADPELYKKMEAAFDFLNTFLEGHQYVAGDSLTVADLALLASVSTFEVAGFDFSKYANVAKWYANAKTVAPGFDENWEGCLEFKKFFN</sequence>
<gene>
    <name type="primary">GST1</name>
</gene>
<organism>
    <name type="scientific">Lucilia cuprina</name>
    <name type="common">Green bottle fly</name>
    <name type="synonym">Australian sheep blowfly</name>
    <dbReference type="NCBI Taxonomy" id="7375"/>
    <lineage>
        <taxon>Eukaryota</taxon>
        <taxon>Metazoa</taxon>
        <taxon>Ecdysozoa</taxon>
        <taxon>Arthropoda</taxon>
        <taxon>Hexapoda</taxon>
        <taxon>Insecta</taxon>
        <taxon>Pterygota</taxon>
        <taxon>Neoptera</taxon>
        <taxon>Endopterygota</taxon>
        <taxon>Diptera</taxon>
        <taxon>Brachycera</taxon>
        <taxon>Muscomorpha</taxon>
        <taxon>Oestroidea</taxon>
        <taxon>Calliphoridae</taxon>
        <taxon>Luciliinae</taxon>
        <taxon>Lucilia</taxon>
    </lineage>
</organism>
<evidence type="ECO:0000250" key="1"/>
<evidence type="ECO:0000305" key="2"/>
<dbReference type="EC" id="2.5.1.18"/>
<dbReference type="EMBL" id="L23126">
    <property type="protein sequence ID" value="AAA29287.1"/>
    <property type="molecule type" value="mRNA"/>
</dbReference>
<dbReference type="PIR" id="S43851">
    <property type="entry name" value="S43851"/>
</dbReference>
<dbReference type="SMR" id="P42860"/>
<dbReference type="OrthoDB" id="2309723at2759"/>
<dbReference type="BRENDA" id="2.5.1.18">
    <property type="organism ID" value="3079"/>
</dbReference>
<dbReference type="SABIO-RK" id="P42860"/>
<dbReference type="GO" id="GO:0004364">
    <property type="term" value="F:glutathione transferase activity"/>
    <property type="evidence" value="ECO:0007669"/>
    <property type="project" value="UniProtKB-EC"/>
</dbReference>
<dbReference type="GO" id="GO:0006749">
    <property type="term" value="P:glutathione metabolic process"/>
    <property type="evidence" value="ECO:0007669"/>
    <property type="project" value="TreeGrafter"/>
</dbReference>
<dbReference type="CDD" id="cd03177">
    <property type="entry name" value="GST_C_Delta_Epsilon"/>
    <property type="match status" value="1"/>
</dbReference>
<dbReference type="CDD" id="cd03045">
    <property type="entry name" value="GST_N_Delta_Epsilon"/>
    <property type="match status" value="1"/>
</dbReference>
<dbReference type="FunFam" id="3.40.30.10:FF:000034">
    <property type="entry name" value="glutathione S-transferase 1"/>
    <property type="match status" value="1"/>
</dbReference>
<dbReference type="FunFam" id="1.20.1050.10:FF:000007">
    <property type="entry name" value="Glutathione S-transferase 1-1"/>
    <property type="match status" value="1"/>
</dbReference>
<dbReference type="Gene3D" id="1.20.1050.10">
    <property type="match status" value="1"/>
</dbReference>
<dbReference type="Gene3D" id="3.40.30.10">
    <property type="entry name" value="Glutaredoxin"/>
    <property type="match status" value="1"/>
</dbReference>
<dbReference type="InterPro" id="IPR010987">
    <property type="entry name" value="Glutathione-S-Trfase_C-like"/>
</dbReference>
<dbReference type="InterPro" id="IPR036282">
    <property type="entry name" value="Glutathione-S-Trfase_C_sf"/>
</dbReference>
<dbReference type="InterPro" id="IPR040079">
    <property type="entry name" value="Glutathione_S-Trfase"/>
</dbReference>
<dbReference type="InterPro" id="IPR004045">
    <property type="entry name" value="Glutathione_S-Trfase_N"/>
</dbReference>
<dbReference type="InterPro" id="IPR004046">
    <property type="entry name" value="GST_C"/>
</dbReference>
<dbReference type="InterPro" id="IPR036249">
    <property type="entry name" value="Thioredoxin-like_sf"/>
</dbReference>
<dbReference type="PANTHER" id="PTHR43969">
    <property type="entry name" value="GLUTATHIONE S TRANSFERASE D10, ISOFORM A-RELATED"/>
    <property type="match status" value="1"/>
</dbReference>
<dbReference type="PANTHER" id="PTHR43969:SF9">
    <property type="entry name" value="GLUTATHIONE S TRANSFERASE D10, ISOFORM A-RELATED"/>
    <property type="match status" value="1"/>
</dbReference>
<dbReference type="Pfam" id="PF00043">
    <property type="entry name" value="GST_C"/>
    <property type="match status" value="1"/>
</dbReference>
<dbReference type="Pfam" id="PF02798">
    <property type="entry name" value="GST_N"/>
    <property type="match status" value="1"/>
</dbReference>
<dbReference type="SFLD" id="SFLDS00019">
    <property type="entry name" value="Glutathione_Transferase_(cytos"/>
    <property type="match status" value="1"/>
</dbReference>
<dbReference type="SFLD" id="SFLDG01153">
    <property type="entry name" value="Main.4:_Theta-like"/>
    <property type="match status" value="1"/>
</dbReference>
<dbReference type="SUPFAM" id="SSF47616">
    <property type="entry name" value="GST C-terminal domain-like"/>
    <property type="match status" value="1"/>
</dbReference>
<dbReference type="SUPFAM" id="SSF52833">
    <property type="entry name" value="Thioredoxin-like"/>
    <property type="match status" value="1"/>
</dbReference>
<dbReference type="PROSITE" id="PS50405">
    <property type="entry name" value="GST_CTER"/>
    <property type="match status" value="1"/>
</dbReference>
<dbReference type="PROSITE" id="PS50404">
    <property type="entry name" value="GST_NTER"/>
    <property type="match status" value="1"/>
</dbReference>
<protein>
    <recommendedName>
        <fullName>Glutathione S-transferase 1-1</fullName>
        <ecNumber>2.5.1.18</ecNumber>
    </recommendedName>
    <alternativeName>
        <fullName>GST class-theta</fullName>
    </alternativeName>
</protein>
<comment type="function">
    <text>Conjugation of reduced glutathione to a wide number of exogenous and endogenous hydrophobic electrophiles.</text>
</comment>
<comment type="catalytic activity">
    <reaction>
        <text>RX + glutathione = an S-substituted glutathione + a halide anion + H(+)</text>
        <dbReference type="Rhea" id="RHEA:16437"/>
        <dbReference type="ChEBI" id="CHEBI:15378"/>
        <dbReference type="ChEBI" id="CHEBI:16042"/>
        <dbReference type="ChEBI" id="CHEBI:17792"/>
        <dbReference type="ChEBI" id="CHEBI:57925"/>
        <dbReference type="ChEBI" id="CHEBI:90779"/>
        <dbReference type="EC" id="2.5.1.18"/>
    </reaction>
</comment>
<comment type="subunit">
    <text>Homodimer.</text>
</comment>
<comment type="similarity">
    <text evidence="2">Belongs to the GST superfamily. Theta family.</text>
</comment>